<accession>P69007</accession>
<accession>P02323</accession>
<evidence type="ECO:0000256" key="1">
    <source>
        <dbReference type="SAM" id="MobiDB-lite"/>
    </source>
</evidence>
<feature type="peptide" id="PRO_0000044304" description="Protamine-B">
    <location>
        <begin position="1"/>
        <end position="27"/>
    </location>
</feature>
<feature type="region of interest" description="Disordered" evidence="1">
    <location>
        <begin position="1"/>
        <end position="27"/>
    </location>
</feature>
<comment type="function">
    <text>Protamines substitute for histones in the chromatin of sperm during the haploid phase of spermatogenesis. They compact sperm DNA into a highly condensed, stable and inactive complex.</text>
</comment>
<comment type="subcellular location">
    <subcellularLocation>
        <location>Nucleus</location>
    </subcellularLocation>
    <subcellularLocation>
        <location>Chromosome</location>
    </subcellularLocation>
</comment>
<comment type="tissue specificity">
    <text>Testis.</text>
</comment>
<proteinExistence type="evidence at protein level"/>
<name>PRTB_ACIST</name>
<reference key="1">
    <citation type="journal article" date="1979" name="Khim. Prirod. Soedin.">
        <authorList>
            <person name="Rybin V.K."/>
            <person name="Yulikova E.P."/>
        </authorList>
    </citation>
    <scope>PROTEIN SEQUENCE</scope>
</reference>
<keyword id="KW-0158">Chromosome</keyword>
<keyword id="KW-0217">Developmental protein</keyword>
<keyword id="KW-0221">Differentiation</keyword>
<keyword id="KW-0903">Direct protein sequencing</keyword>
<keyword id="KW-0226">DNA condensation</keyword>
<keyword id="KW-0238">DNA-binding</keyword>
<keyword id="KW-0544">Nucleosome core</keyword>
<keyword id="KW-0539">Nucleus</keyword>
<keyword id="KW-0744">Spermatogenesis</keyword>
<sequence>ARRRRRSSRPQRRRRRRRHGRRRRGRR</sequence>
<dbReference type="PIR" id="A02665">
    <property type="entry name" value="SRAPC"/>
</dbReference>
<dbReference type="GO" id="GO:0000786">
    <property type="term" value="C:nucleosome"/>
    <property type="evidence" value="ECO:0007669"/>
    <property type="project" value="UniProtKB-KW"/>
</dbReference>
<dbReference type="GO" id="GO:0005634">
    <property type="term" value="C:nucleus"/>
    <property type="evidence" value="ECO:0007669"/>
    <property type="project" value="UniProtKB-SubCell"/>
</dbReference>
<dbReference type="GO" id="GO:0003677">
    <property type="term" value="F:DNA binding"/>
    <property type="evidence" value="ECO:0007669"/>
    <property type="project" value="UniProtKB-KW"/>
</dbReference>
<dbReference type="GO" id="GO:0030154">
    <property type="term" value="P:cell differentiation"/>
    <property type="evidence" value="ECO:0007669"/>
    <property type="project" value="UniProtKB-KW"/>
</dbReference>
<dbReference type="GO" id="GO:0030261">
    <property type="term" value="P:chromosome condensation"/>
    <property type="evidence" value="ECO:0007669"/>
    <property type="project" value="UniProtKB-KW"/>
</dbReference>
<dbReference type="GO" id="GO:0007283">
    <property type="term" value="P:spermatogenesis"/>
    <property type="evidence" value="ECO:0007669"/>
    <property type="project" value="UniProtKB-KW"/>
</dbReference>
<protein>
    <recommendedName>
        <fullName>Protamine-B</fullName>
    </recommendedName>
    <alternativeName>
        <fullName>Stellin-B</fullName>
    </alternativeName>
    <alternativeName>
        <fullName>Sturine-B</fullName>
    </alternativeName>
</protein>
<organism>
    <name type="scientific">Acipenser stellatus</name>
    <name type="common">Sevruga</name>
    <name type="synonym">Starry sturgeon</name>
    <dbReference type="NCBI Taxonomy" id="7903"/>
    <lineage>
        <taxon>Eukaryota</taxon>
        <taxon>Metazoa</taxon>
        <taxon>Chordata</taxon>
        <taxon>Craniata</taxon>
        <taxon>Vertebrata</taxon>
        <taxon>Euteleostomi</taxon>
        <taxon>Actinopterygii</taxon>
        <taxon>Chondrostei</taxon>
        <taxon>Acipenseriformes</taxon>
        <taxon>Acipenseridae</taxon>
        <taxon>Acipenser</taxon>
    </lineage>
</organism>